<accession>Q4WSA8</accession>
<accession>Q6MYD9</accession>
<organism>
    <name type="scientific">Aspergillus fumigatus (strain ATCC MYA-4609 / CBS 101355 / FGSC A1100 / Af293)</name>
    <name type="common">Neosartorya fumigata</name>
    <dbReference type="NCBI Taxonomy" id="330879"/>
    <lineage>
        <taxon>Eukaryota</taxon>
        <taxon>Fungi</taxon>
        <taxon>Dikarya</taxon>
        <taxon>Ascomycota</taxon>
        <taxon>Pezizomycotina</taxon>
        <taxon>Eurotiomycetes</taxon>
        <taxon>Eurotiomycetidae</taxon>
        <taxon>Eurotiales</taxon>
        <taxon>Aspergillaceae</taxon>
        <taxon>Aspergillus</taxon>
        <taxon>Aspergillus subgen. Fumigati</taxon>
    </lineage>
</organism>
<protein>
    <recommendedName>
        <fullName>Serine/threonine-protein phosphatase 2A activator 2</fullName>
        <ecNumber>5.2.1.8</ecNumber>
    </recommendedName>
    <alternativeName>
        <fullName>Peptidyl-prolyl cis-trans isomerase PTPA-2</fullName>
        <shortName>PPIase PTPA-2</shortName>
        <shortName>Rotamase PTPA-2</shortName>
    </alternativeName>
    <alternativeName>
        <fullName>Phosphotyrosyl phosphatase activator 2</fullName>
    </alternativeName>
</protein>
<proteinExistence type="inferred from homology"/>
<keyword id="KW-0963">Cytoplasm</keyword>
<keyword id="KW-0413">Isomerase</keyword>
<keyword id="KW-1185">Reference proteome</keyword>
<keyword id="KW-0697">Rotamase</keyword>
<evidence type="ECO:0000250" key="1"/>
<evidence type="ECO:0000256" key="2">
    <source>
        <dbReference type="SAM" id="MobiDB-lite"/>
    </source>
</evidence>
<evidence type="ECO:0000305" key="3"/>
<reference key="1">
    <citation type="journal article" date="2004" name="Fungal Genet. Biol.">
        <title>Insight into the genome of Aspergillus fumigatus: analysis of a 922 kb region encompassing the nitrate assimilation gene cluster.</title>
        <authorList>
            <person name="Pain A."/>
            <person name="Woodward J.R."/>
            <person name="Quail M.A."/>
            <person name="Anderson M.J."/>
            <person name="Clark R."/>
            <person name="Collins M."/>
            <person name="Fosker N."/>
            <person name="Fraser A."/>
            <person name="Harris D.E."/>
            <person name="Larke N."/>
            <person name="Murphy L.D."/>
            <person name="Humphray S."/>
            <person name="O'Neil S."/>
            <person name="Pertea M."/>
            <person name="Price C."/>
            <person name="Rabbinowitsch E."/>
            <person name="Rajandream M.A."/>
            <person name="Salzberg S.L."/>
            <person name="Saunders D."/>
            <person name="Seeger K."/>
            <person name="Sharp S."/>
            <person name="Warren T."/>
            <person name="Denning D.W."/>
            <person name="Barrell B.G."/>
            <person name="Hall N."/>
        </authorList>
    </citation>
    <scope>NUCLEOTIDE SEQUENCE [LARGE SCALE GENOMIC DNA]</scope>
    <source>
        <strain>ATCC MYA-4609 / CBS 101355 / FGSC A1100 / Af293</strain>
    </source>
</reference>
<reference key="2">
    <citation type="journal article" date="2005" name="Nature">
        <title>Genomic sequence of the pathogenic and allergenic filamentous fungus Aspergillus fumigatus.</title>
        <authorList>
            <person name="Nierman W.C."/>
            <person name="Pain A."/>
            <person name="Anderson M.J."/>
            <person name="Wortman J.R."/>
            <person name="Kim H.S."/>
            <person name="Arroyo J."/>
            <person name="Berriman M."/>
            <person name="Abe K."/>
            <person name="Archer D.B."/>
            <person name="Bermejo C."/>
            <person name="Bennett J.W."/>
            <person name="Bowyer P."/>
            <person name="Chen D."/>
            <person name="Collins M."/>
            <person name="Coulsen R."/>
            <person name="Davies R."/>
            <person name="Dyer P.S."/>
            <person name="Farman M.L."/>
            <person name="Fedorova N."/>
            <person name="Fedorova N.D."/>
            <person name="Feldblyum T.V."/>
            <person name="Fischer R."/>
            <person name="Fosker N."/>
            <person name="Fraser A."/>
            <person name="Garcia J.L."/>
            <person name="Garcia M.J."/>
            <person name="Goble A."/>
            <person name="Goldman G.H."/>
            <person name="Gomi K."/>
            <person name="Griffith-Jones S."/>
            <person name="Gwilliam R."/>
            <person name="Haas B.J."/>
            <person name="Haas H."/>
            <person name="Harris D.E."/>
            <person name="Horiuchi H."/>
            <person name="Huang J."/>
            <person name="Humphray S."/>
            <person name="Jimenez J."/>
            <person name="Keller N."/>
            <person name="Khouri H."/>
            <person name="Kitamoto K."/>
            <person name="Kobayashi T."/>
            <person name="Konzack S."/>
            <person name="Kulkarni R."/>
            <person name="Kumagai T."/>
            <person name="Lafton A."/>
            <person name="Latge J.-P."/>
            <person name="Li W."/>
            <person name="Lord A."/>
            <person name="Lu C."/>
            <person name="Majoros W.H."/>
            <person name="May G.S."/>
            <person name="Miller B.L."/>
            <person name="Mohamoud Y."/>
            <person name="Molina M."/>
            <person name="Monod M."/>
            <person name="Mouyna I."/>
            <person name="Mulligan S."/>
            <person name="Murphy L.D."/>
            <person name="O'Neil S."/>
            <person name="Paulsen I."/>
            <person name="Penalva M.A."/>
            <person name="Pertea M."/>
            <person name="Price C."/>
            <person name="Pritchard B.L."/>
            <person name="Quail M.A."/>
            <person name="Rabbinowitsch E."/>
            <person name="Rawlins N."/>
            <person name="Rajandream M.A."/>
            <person name="Reichard U."/>
            <person name="Renauld H."/>
            <person name="Robson G.D."/>
            <person name="Rodriguez de Cordoba S."/>
            <person name="Rodriguez-Pena J.M."/>
            <person name="Ronning C.M."/>
            <person name="Rutter S."/>
            <person name="Salzberg S.L."/>
            <person name="Sanchez M."/>
            <person name="Sanchez-Ferrero J.C."/>
            <person name="Saunders D."/>
            <person name="Seeger K."/>
            <person name="Squares R."/>
            <person name="Squares S."/>
            <person name="Takeuchi M."/>
            <person name="Tekaia F."/>
            <person name="Turner G."/>
            <person name="Vazquez de Aldana C.R."/>
            <person name="Weidman J."/>
            <person name="White O."/>
            <person name="Woodward J.R."/>
            <person name="Yu J.-H."/>
            <person name="Fraser C.M."/>
            <person name="Galagan J.E."/>
            <person name="Asai K."/>
            <person name="Machida M."/>
            <person name="Hall N."/>
            <person name="Barrell B.G."/>
            <person name="Denning D.W."/>
        </authorList>
    </citation>
    <scope>NUCLEOTIDE SEQUENCE [LARGE SCALE GENOMIC DNA]</scope>
    <source>
        <strain>ATCC MYA-4609 / CBS 101355 / FGSC A1100 / Af293</strain>
    </source>
</reference>
<dbReference type="EC" id="5.2.1.8"/>
<dbReference type="EMBL" id="BX649606">
    <property type="protein sequence ID" value="CAF32064.1"/>
    <property type="molecule type" value="Genomic_DNA"/>
</dbReference>
<dbReference type="EMBL" id="AAHF01000004">
    <property type="protein sequence ID" value="EAL90674.1"/>
    <property type="molecule type" value="Genomic_DNA"/>
</dbReference>
<dbReference type="RefSeq" id="XP_752712.1">
    <property type="nucleotide sequence ID" value="XM_747619.1"/>
</dbReference>
<dbReference type="SMR" id="Q4WSA8"/>
<dbReference type="FunCoup" id="Q4WSA8">
    <property type="interactions" value="540"/>
</dbReference>
<dbReference type="STRING" id="330879.Q4WSA8"/>
<dbReference type="EnsemblFungi" id="EAL90674">
    <property type="protein sequence ID" value="EAL90674"/>
    <property type="gene ID" value="AFUA_1G13420"/>
</dbReference>
<dbReference type="GeneID" id="3510295"/>
<dbReference type="KEGG" id="afm:AFUA_1G13420"/>
<dbReference type="VEuPathDB" id="FungiDB:Afu1g13420"/>
<dbReference type="eggNOG" id="KOG2867">
    <property type="taxonomic scope" value="Eukaryota"/>
</dbReference>
<dbReference type="HOGENOM" id="CLU_030733_0_0_1"/>
<dbReference type="InParanoid" id="Q4WSA8"/>
<dbReference type="OMA" id="SWIKINA"/>
<dbReference type="OrthoDB" id="16120at2759"/>
<dbReference type="Proteomes" id="UP000002530">
    <property type="component" value="Chromosome 1"/>
</dbReference>
<dbReference type="GO" id="GO:0005737">
    <property type="term" value="C:cytoplasm"/>
    <property type="evidence" value="ECO:0000318"/>
    <property type="project" value="GO_Central"/>
</dbReference>
<dbReference type="GO" id="GO:0005634">
    <property type="term" value="C:nucleus"/>
    <property type="evidence" value="ECO:0000318"/>
    <property type="project" value="GO_Central"/>
</dbReference>
<dbReference type="GO" id="GO:0000159">
    <property type="term" value="C:protein phosphatase type 2A complex"/>
    <property type="evidence" value="ECO:0000318"/>
    <property type="project" value="GO_Central"/>
</dbReference>
<dbReference type="GO" id="GO:0003755">
    <property type="term" value="F:peptidyl-prolyl cis-trans isomerase activity"/>
    <property type="evidence" value="ECO:0000318"/>
    <property type="project" value="GO_Central"/>
</dbReference>
<dbReference type="GO" id="GO:0008160">
    <property type="term" value="F:protein tyrosine phosphatase activator activity"/>
    <property type="evidence" value="ECO:0000318"/>
    <property type="project" value="GO_Central"/>
</dbReference>
<dbReference type="GO" id="GO:0007052">
    <property type="term" value="P:mitotic spindle organization"/>
    <property type="evidence" value="ECO:0000318"/>
    <property type="project" value="GO_Central"/>
</dbReference>
<dbReference type="CDD" id="cd04087">
    <property type="entry name" value="PTPA"/>
    <property type="match status" value="1"/>
</dbReference>
<dbReference type="FunFam" id="1.20.120.1150:FF:000002">
    <property type="entry name" value="Serine/threonine-protein phosphatase 2A activator"/>
    <property type="match status" value="1"/>
</dbReference>
<dbReference type="Gene3D" id="1.20.120.1150">
    <property type="match status" value="1"/>
</dbReference>
<dbReference type="InterPro" id="IPR004327">
    <property type="entry name" value="Phstyr_phstse_ac"/>
</dbReference>
<dbReference type="InterPro" id="IPR043170">
    <property type="entry name" value="PTPA_C_lid"/>
</dbReference>
<dbReference type="InterPro" id="IPR037218">
    <property type="entry name" value="PTPA_sf"/>
</dbReference>
<dbReference type="PANTHER" id="PTHR10012">
    <property type="entry name" value="SERINE/THREONINE-PROTEIN PHOSPHATASE 2A REGULATORY SUBUNIT B"/>
    <property type="match status" value="1"/>
</dbReference>
<dbReference type="PANTHER" id="PTHR10012:SF5">
    <property type="entry name" value="SERINE_THREONINE-PROTEIN PHOSPHATASE 2A ACTIVATOR 2"/>
    <property type="match status" value="1"/>
</dbReference>
<dbReference type="Pfam" id="PF03095">
    <property type="entry name" value="PTPA"/>
    <property type="match status" value="1"/>
</dbReference>
<dbReference type="PIRSF" id="PIRSF016325">
    <property type="entry name" value="Phstyr_phstse_ac"/>
    <property type="match status" value="1"/>
</dbReference>
<dbReference type="SUPFAM" id="SSF140984">
    <property type="entry name" value="PTPA-like"/>
    <property type="match status" value="1"/>
</dbReference>
<gene>
    <name type="primary">rrd2</name>
    <name type="ORF">AfA34E6.015c</name>
    <name type="ORF">AFUA_1G13420</name>
</gene>
<feature type="chain" id="PRO_0000226107" description="Serine/threonine-protein phosphatase 2A activator 2">
    <location>
        <begin position="1"/>
        <end position="422"/>
    </location>
</feature>
<feature type="region of interest" description="Disordered" evidence="2">
    <location>
        <begin position="1"/>
        <end position="61"/>
    </location>
</feature>
<feature type="region of interest" description="Disordered" evidence="2">
    <location>
        <begin position="360"/>
        <end position="389"/>
    </location>
</feature>
<feature type="compositionally biased region" description="Polar residues" evidence="2">
    <location>
        <begin position="1"/>
        <end position="12"/>
    </location>
</feature>
<feature type="compositionally biased region" description="Basic and acidic residues" evidence="2">
    <location>
        <begin position="18"/>
        <end position="28"/>
    </location>
</feature>
<feature type="compositionally biased region" description="Pro residues" evidence="2">
    <location>
        <begin position="38"/>
        <end position="52"/>
    </location>
</feature>
<feature type="compositionally biased region" description="Basic and acidic residues" evidence="2">
    <location>
        <begin position="361"/>
        <end position="377"/>
    </location>
</feature>
<sequence>MMPSHATMSSPPAGTKLDLSKKLSELRASRRSHSGPSPREPTPVTPPLPSPPDLSTHTYTRPVRRILSRKDHETFLASSTYTLVVSFTFSLSDSVRGRAVTDNKDQPASPNISRILSVIDTIRQLVDKHPSIDQGGSRFGNPAFRDLFDDVAAQNATWHREIIGLQNADAIEEVSSYLVHSLGSRDRLDYGSGHELNFMMWLLCLRQMQMISTADFPMIVFRVYLEYMRLMRQVQMTYYLEPAGSHGVWGLDDYHFLPFLFGAAQLVDHPYITPLAIHNTAVLDEEGDKYIYLDQVRWVDSVKTVKGLRWHSPMLDDISGAKNWLKIEGGMKKMFIKEVLGKLPIMQHFLFGSLLPADPSMGERSDDAQEDDLHDHGNGNPHARHTDHFGDCCGIKVPSTVAAGAEMRKRIGGTGLRPIPFD</sequence>
<comment type="function">
    <text evidence="1">PPIases accelerate the folding of proteins. It catalyzes the cis-trans isomerization of proline imidic peptide bonds in oligopeptides. Acts as a regulatory subunit for PP2A-like phosphatases modulating their activity or substrate specificity, probably by inducing a conformational change in the catalytic subunit, a direct target of the PPIase. Can reactivate inactive phosphatase PP2A-phosphatase methylesterase complexes (PP2Ai) in presence of ATP and Mg(2+) by dissociating the inactive form from the complex (By similarity).</text>
</comment>
<comment type="catalytic activity">
    <reaction>
        <text>[protein]-peptidylproline (omega=180) = [protein]-peptidylproline (omega=0)</text>
        <dbReference type="Rhea" id="RHEA:16237"/>
        <dbReference type="Rhea" id="RHEA-COMP:10747"/>
        <dbReference type="Rhea" id="RHEA-COMP:10748"/>
        <dbReference type="ChEBI" id="CHEBI:83833"/>
        <dbReference type="ChEBI" id="CHEBI:83834"/>
        <dbReference type="EC" id="5.2.1.8"/>
    </reaction>
</comment>
<comment type="subcellular location">
    <subcellularLocation>
        <location evidence="1">Cytoplasm</location>
    </subcellularLocation>
</comment>
<comment type="similarity">
    <text evidence="3">Belongs to the PTPA-type PPIase family.</text>
</comment>
<name>PTPA2_ASPFU</name>